<protein>
    <recommendedName>
        <fullName>Probable glucose-1-phosphate cytidylyltransferase</fullName>
        <ecNumber>2.7.7.33</ecNumber>
    </recommendedName>
    <alternativeName>
        <fullName>CDP-glucose pyrophosphorylase</fullName>
    </alternativeName>
</protein>
<feature type="chain" id="PRO_0000389445" description="Probable glucose-1-phosphate cytidylyltransferase">
    <location>
        <begin position="1"/>
        <end position="254"/>
    </location>
</feature>
<feature type="binding site" evidence="1">
    <location>
        <begin position="6"/>
        <end position="10"/>
    </location>
    <ligand>
        <name>substrate</name>
    </ligand>
</feature>
<feature type="binding site" evidence="1">
    <location>
        <begin position="11"/>
        <end position="13"/>
    </location>
    <ligand>
        <name>substrate</name>
    </ligand>
</feature>
<feature type="binding site" evidence="1">
    <location>
        <position position="23"/>
    </location>
    <ligand>
        <name>substrate</name>
    </ligand>
</feature>
<feature type="binding site" evidence="1">
    <location>
        <position position="103"/>
    </location>
    <ligand>
        <name>substrate</name>
    </ligand>
</feature>
<feature type="binding site" evidence="1">
    <location>
        <position position="108"/>
    </location>
    <ligand>
        <name>substrate</name>
    </ligand>
</feature>
<feature type="binding site" evidence="1">
    <location>
        <position position="126"/>
    </location>
    <ligand>
        <name>substrate</name>
    </ligand>
</feature>
<feature type="binding site" evidence="1">
    <location>
        <position position="127"/>
    </location>
    <ligand>
        <name>Mg(2+)</name>
        <dbReference type="ChEBI" id="CHEBI:18420"/>
    </ligand>
</feature>
<feature type="binding site" evidence="1">
    <location>
        <position position="232"/>
    </location>
    <ligand>
        <name>Mg(2+)</name>
        <dbReference type="ChEBI" id="CHEBI:18420"/>
    </ligand>
</feature>
<accession>O06486</accession>
<accession>Q797B2</accession>
<dbReference type="EC" id="2.7.7.33"/>
<dbReference type="EMBL" id="D86418">
    <property type="protein sequence ID" value="BAA20117.1"/>
    <property type="molecule type" value="Genomic_DNA"/>
</dbReference>
<dbReference type="EMBL" id="AL009126">
    <property type="protein sequence ID" value="CAB12546.1"/>
    <property type="molecule type" value="Genomic_DNA"/>
</dbReference>
<dbReference type="PIR" id="C69815">
    <property type="entry name" value="C69815"/>
</dbReference>
<dbReference type="RefSeq" id="WP_003244408.1">
    <property type="nucleotide sequence ID" value="NZ_OZ025638.1"/>
</dbReference>
<dbReference type="SMR" id="O06486"/>
<dbReference type="FunCoup" id="O06486">
    <property type="interactions" value="230"/>
</dbReference>
<dbReference type="STRING" id="224308.BSU07270"/>
<dbReference type="PaxDb" id="224308-BSU07270"/>
<dbReference type="EnsemblBacteria" id="CAB12546">
    <property type="protein sequence ID" value="CAB12546"/>
    <property type="gene ID" value="BSU_07270"/>
</dbReference>
<dbReference type="GeneID" id="938779"/>
<dbReference type="KEGG" id="bsu:BSU07270"/>
<dbReference type="PATRIC" id="fig|224308.179.peg.789"/>
<dbReference type="eggNOG" id="COG1208">
    <property type="taxonomic scope" value="Bacteria"/>
</dbReference>
<dbReference type="InParanoid" id="O06486"/>
<dbReference type="OrthoDB" id="9801899at2"/>
<dbReference type="PhylomeDB" id="O06486"/>
<dbReference type="BioCyc" id="BSUB:BSU07270-MONOMER"/>
<dbReference type="Proteomes" id="UP000001570">
    <property type="component" value="Chromosome"/>
</dbReference>
<dbReference type="GO" id="GO:0047343">
    <property type="term" value="F:glucose-1-phosphate cytidylyltransferase activity"/>
    <property type="evidence" value="ECO:0007669"/>
    <property type="project" value="UniProtKB-EC"/>
</dbReference>
<dbReference type="GO" id="GO:0046872">
    <property type="term" value="F:metal ion binding"/>
    <property type="evidence" value="ECO:0007669"/>
    <property type="project" value="UniProtKB-KW"/>
</dbReference>
<dbReference type="GO" id="GO:0000166">
    <property type="term" value="F:nucleotide binding"/>
    <property type="evidence" value="ECO:0007669"/>
    <property type="project" value="UniProtKB-KW"/>
</dbReference>
<dbReference type="GO" id="GO:0009058">
    <property type="term" value="P:biosynthetic process"/>
    <property type="evidence" value="ECO:0007669"/>
    <property type="project" value="InterPro"/>
</dbReference>
<dbReference type="CDD" id="cd02524">
    <property type="entry name" value="G1P_cytidylyltransferase"/>
    <property type="match status" value="1"/>
</dbReference>
<dbReference type="Gene3D" id="3.90.550.10">
    <property type="entry name" value="Spore Coat Polysaccharide Biosynthesis Protein SpsA, Chain A"/>
    <property type="match status" value="1"/>
</dbReference>
<dbReference type="InterPro" id="IPR013446">
    <property type="entry name" value="G1P_cyt_trans-like"/>
</dbReference>
<dbReference type="InterPro" id="IPR005835">
    <property type="entry name" value="NTP_transferase_dom"/>
</dbReference>
<dbReference type="InterPro" id="IPR029044">
    <property type="entry name" value="Nucleotide-diphossugar_trans"/>
</dbReference>
<dbReference type="PANTHER" id="PTHR47183">
    <property type="entry name" value="GLUCOSE-1-PHOSPHATE CYTIDYLYLTRANSFERASE-RELATED"/>
    <property type="match status" value="1"/>
</dbReference>
<dbReference type="PANTHER" id="PTHR47183:SF2">
    <property type="entry name" value="GLUCOSE-1-PHOSPHATE CYTIDYLYLTRANSFERASE-RELATED"/>
    <property type="match status" value="1"/>
</dbReference>
<dbReference type="Pfam" id="PF00483">
    <property type="entry name" value="NTP_transferase"/>
    <property type="match status" value="1"/>
</dbReference>
<dbReference type="SUPFAM" id="SSF53448">
    <property type="entry name" value="Nucleotide-diphospho-sugar transferases"/>
    <property type="match status" value="1"/>
</dbReference>
<evidence type="ECO:0000250" key="1"/>
<evidence type="ECO:0000305" key="2"/>
<comment type="function">
    <text evidence="1">Catalyzes the transfer of a CMP moiety from CTP to glucose 1-phosphate.</text>
</comment>
<comment type="catalytic activity">
    <reaction>
        <text>alpha-D-glucose 1-phosphate + CTP + H(+) = CDP-D-glucose + diphosphate</text>
        <dbReference type="Rhea" id="RHEA:18213"/>
        <dbReference type="ChEBI" id="CHEBI:15378"/>
        <dbReference type="ChEBI" id="CHEBI:33019"/>
        <dbReference type="ChEBI" id="CHEBI:37563"/>
        <dbReference type="ChEBI" id="CHEBI:58601"/>
        <dbReference type="ChEBI" id="CHEBI:58660"/>
        <dbReference type="EC" id="2.7.7.33"/>
    </reaction>
</comment>
<comment type="cofactor">
    <cofactor evidence="1">
        <name>Mg(2+)</name>
        <dbReference type="ChEBI" id="CHEBI:18420"/>
    </cofactor>
    <text evidence="1">Binds 1 Mg(2+) ion per subunit.</text>
</comment>
<comment type="similarity">
    <text evidence="2">Belongs to the glucose-1-phosphate cytidylyltransferase family.</text>
</comment>
<sequence>MKAVILCGGKGTRMSEVTNDIPKPLAMIGGKPILWHIMKIYQYYGVNEFILLLGYKGEKIKEYFLDYEWKHNSLTLDSSTGEVQMLGQPETWKITFLETGVDTLTAGRILQAKDYIGDETFLLTYGDGLANINLFHLISYHQTKGAAATVTGIDKVSQFGTLTVEDGMAKTFSEKTSSDGIINGGFFVLSPKVFDYLPKDGNTMFEDEPLKNLAKDGELAVYRHYGFWTAIDTYKNLLEVNKMWNQGQQVWKVW</sequence>
<reference key="1">
    <citation type="journal article" date="1997" name="Microbiology">
        <title>A 23.4 kb segment at the 69 degrees-70 degrees region of the Bacillus subtilis genome.</title>
        <authorList>
            <person name="Yamamoto H."/>
            <person name="Uchiyama S."/>
            <person name="Nugroho F.A."/>
            <person name="Sekiguchi J."/>
        </authorList>
    </citation>
    <scope>NUCLEOTIDE SEQUENCE [GENOMIC DNA]</scope>
    <source>
        <strain>168 / AC327</strain>
    </source>
</reference>
<reference key="2">
    <citation type="journal article" date="1997" name="Nature">
        <title>The complete genome sequence of the Gram-positive bacterium Bacillus subtilis.</title>
        <authorList>
            <person name="Kunst F."/>
            <person name="Ogasawara N."/>
            <person name="Moszer I."/>
            <person name="Albertini A.M."/>
            <person name="Alloni G."/>
            <person name="Azevedo V."/>
            <person name="Bertero M.G."/>
            <person name="Bessieres P."/>
            <person name="Bolotin A."/>
            <person name="Borchert S."/>
            <person name="Borriss R."/>
            <person name="Boursier L."/>
            <person name="Brans A."/>
            <person name="Braun M."/>
            <person name="Brignell S.C."/>
            <person name="Bron S."/>
            <person name="Brouillet S."/>
            <person name="Bruschi C.V."/>
            <person name="Caldwell B."/>
            <person name="Capuano V."/>
            <person name="Carter N.M."/>
            <person name="Choi S.-K."/>
            <person name="Codani J.-J."/>
            <person name="Connerton I.F."/>
            <person name="Cummings N.J."/>
            <person name="Daniel R.A."/>
            <person name="Denizot F."/>
            <person name="Devine K.M."/>
            <person name="Duesterhoeft A."/>
            <person name="Ehrlich S.D."/>
            <person name="Emmerson P.T."/>
            <person name="Entian K.-D."/>
            <person name="Errington J."/>
            <person name="Fabret C."/>
            <person name="Ferrari E."/>
            <person name="Foulger D."/>
            <person name="Fritz C."/>
            <person name="Fujita M."/>
            <person name="Fujita Y."/>
            <person name="Fuma S."/>
            <person name="Galizzi A."/>
            <person name="Galleron N."/>
            <person name="Ghim S.-Y."/>
            <person name="Glaser P."/>
            <person name="Goffeau A."/>
            <person name="Golightly E.J."/>
            <person name="Grandi G."/>
            <person name="Guiseppi G."/>
            <person name="Guy B.J."/>
            <person name="Haga K."/>
            <person name="Haiech J."/>
            <person name="Harwood C.R."/>
            <person name="Henaut A."/>
            <person name="Hilbert H."/>
            <person name="Holsappel S."/>
            <person name="Hosono S."/>
            <person name="Hullo M.-F."/>
            <person name="Itaya M."/>
            <person name="Jones L.-M."/>
            <person name="Joris B."/>
            <person name="Karamata D."/>
            <person name="Kasahara Y."/>
            <person name="Klaerr-Blanchard M."/>
            <person name="Klein C."/>
            <person name="Kobayashi Y."/>
            <person name="Koetter P."/>
            <person name="Koningstein G."/>
            <person name="Krogh S."/>
            <person name="Kumano M."/>
            <person name="Kurita K."/>
            <person name="Lapidus A."/>
            <person name="Lardinois S."/>
            <person name="Lauber J."/>
            <person name="Lazarevic V."/>
            <person name="Lee S.-M."/>
            <person name="Levine A."/>
            <person name="Liu H."/>
            <person name="Masuda S."/>
            <person name="Mauel C."/>
            <person name="Medigue C."/>
            <person name="Medina N."/>
            <person name="Mellado R.P."/>
            <person name="Mizuno M."/>
            <person name="Moestl D."/>
            <person name="Nakai S."/>
            <person name="Noback M."/>
            <person name="Noone D."/>
            <person name="O'Reilly M."/>
            <person name="Ogawa K."/>
            <person name="Ogiwara A."/>
            <person name="Oudega B."/>
            <person name="Park S.-H."/>
            <person name="Parro V."/>
            <person name="Pohl T.M."/>
            <person name="Portetelle D."/>
            <person name="Porwollik S."/>
            <person name="Prescott A.M."/>
            <person name="Presecan E."/>
            <person name="Pujic P."/>
            <person name="Purnelle B."/>
            <person name="Rapoport G."/>
            <person name="Rey M."/>
            <person name="Reynolds S."/>
            <person name="Rieger M."/>
            <person name="Rivolta C."/>
            <person name="Rocha E."/>
            <person name="Roche B."/>
            <person name="Rose M."/>
            <person name="Sadaie Y."/>
            <person name="Sato T."/>
            <person name="Scanlan E."/>
            <person name="Schleich S."/>
            <person name="Schroeter R."/>
            <person name="Scoffone F."/>
            <person name="Sekiguchi J."/>
            <person name="Sekowska A."/>
            <person name="Seror S.J."/>
            <person name="Serror P."/>
            <person name="Shin B.-S."/>
            <person name="Soldo B."/>
            <person name="Sorokin A."/>
            <person name="Tacconi E."/>
            <person name="Takagi T."/>
            <person name="Takahashi H."/>
            <person name="Takemaru K."/>
            <person name="Takeuchi M."/>
            <person name="Tamakoshi A."/>
            <person name="Tanaka T."/>
            <person name="Terpstra P."/>
            <person name="Tognoni A."/>
            <person name="Tosato V."/>
            <person name="Uchiyama S."/>
            <person name="Vandenbol M."/>
            <person name="Vannier F."/>
            <person name="Vassarotti A."/>
            <person name="Viari A."/>
            <person name="Wambutt R."/>
            <person name="Wedler E."/>
            <person name="Wedler H."/>
            <person name="Weitzenegger T."/>
            <person name="Winters P."/>
            <person name="Wipat A."/>
            <person name="Yamamoto H."/>
            <person name="Yamane K."/>
            <person name="Yasumoto K."/>
            <person name="Yata K."/>
            <person name="Yoshida K."/>
            <person name="Yoshikawa H.-F."/>
            <person name="Zumstein E."/>
            <person name="Yoshikawa H."/>
            <person name="Danchin A."/>
        </authorList>
    </citation>
    <scope>NUCLEOTIDE SEQUENCE [LARGE SCALE GENOMIC DNA]</scope>
    <source>
        <strain>168</strain>
    </source>
</reference>
<organism>
    <name type="scientific">Bacillus subtilis (strain 168)</name>
    <dbReference type="NCBI Taxonomy" id="224308"/>
    <lineage>
        <taxon>Bacteria</taxon>
        <taxon>Bacillati</taxon>
        <taxon>Bacillota</taxon>
        <taxon>Bacilli</taxon>
        <taxon>Bacillales</taxon>
        <taxon>Bacillaceae</taxon>
        <taxon>Bacillus</taxon>
    </lineage>
</organism>
<name>RFBF_BACSU</name>
<keyword id="KW-0460">Magnesium</keyword>
<keyword id="KW-0479">Metal-binding</keyword>
<keyword id="KW-0547">Nucleotide-binding</keyword>
<keyword id="KW-0548">Nucleotidyltransferase</keyword>
<keyword id="KW-1185">Reference proteome</keyword>
<keyword id="KW-0808">Transferase</keyword>
<gene>
    <name type="primary">yfnH</name>
    <name type="ordered locus">BSU07270</name>
</gene>
<proteinExistence type="inferred from homology"/>